<dbReference type="EC" id="2.7.9.3" evidence="1"/>
<dbReference type="EMBL" id="AM747721">
    <property type="protein sequence ID" value="CAR56423.1"/>
    <property type="molecule type" value="Genomic_DNA"/>
</dbReference>
<dbReference type="RefSeq" id="WP_006484482.1">
    <property type="nucleotide sequence ID" value="NC_011001.1"/>
</dbReference>
<dbReference type="SMR" id="B4EJQ7"/>
<dbReference type="KEGG" id="bcj:BCAM2558"/>
<dbReference type="eggNOG" id="COG0709">
    <property type="taxonomic scope" value="Bacteria"/>
</dbReference>
<dbReference type="HOGENOM" id="CLU_032859_0_1_4"/>
<dbReference type="BioCyc" id="BCEN216591:G1G1V-6670-MONOMER"/>
<dbReference type="Proteomes" id="UP000001035">
    <property type="component" value="Chromosome 2"/>
</dbReference>
<dbReference type="GO" id="GO:0005737">
    <property type="term" value="C:cytoplasm"/>
    <property type="evidence" value="ECO:0007669"/>
    <property type="project" value="TreeGrafter"/>
</dbReference>
<dbReference type="GO" id="GO:0005524">
    <property type="term" value="F:ATP binding"/>
    <property type="evidence" value="ECO:0007669"/>
    <property type="project" value="UniProtKB-UniRule"/>
</dbReference>
<dbReference type="GO" id="GO:0000287">
    <property type="term" value="F:magnesium ion binding"/>
    <property type="evidence" value="ECO:0007669"/>
    <property type="project" value="UniProtKB-UniRule"/>
</dbReference>
<dbReference type="GO" id="GO:0004756">
    <property type="term" value="F:selenide, water dikinase activity"/>
    <property type="evidence" value="ECO:0007669"/>
    <property type="project" value="UniProtKB-UniRule"/>
</dbReference>
<dbReference type="GO" id="GO:0016260">
    <property type="term" value="P:selenocysteine biosynthetic process"/>
    <property type="evidence" value="ECO:0007669"/>
    <property type="project" value="InterPro"/>
</dbReference>
<dbReference type="CDD" id="cd02195">
    <property type="entry name" value="SelD"/>
    <property type="match status" value="1"/>
</dbReference>
<dbReference type="FunFam" id="3.30.1330.10:FF:000003">
    <property type="entry name" value="Selenide, water dikinase"/>
    <property type="match status" value="1"/>
</dbReference>
<dbReference type="FunFam" id="3.90.650.10:FF:000004">
    <property type="entry name" value="Selenide, water dikinase"/>
    <property type="match status" value="1"/>
</dbReference>
<dbReference type="Gene3D" id="3.90.650.10">
    <property type="entry name" value="PurM-like C-terminal domain"/>
    <property type="match status" value="1"/>
</dbReference>
<dbReference type="Gene3D" id="3.30.1330.10">
    <property type="entry name" value="PurM-like, N-terminal domain"/>
    <property type="match status" value="1"/>
</dbReference>
<dbReference type="HAMAP" id="MF_00625">
    <property type="entry name" value="SelD"/>
    <property type="match status" value="1"/>
</dbReference>
<dbReference type="InterPro" id="IPR010918">
    <property type="entry name" value="PurM-like_C_dom"/>
</dbReference>
<dbReference type="InterPro" id="IPR036676">
    <property type="entry name" value="PurM-like_C_sf"/>
</dbReference>
<dbReference type="InterPro" id="IPR016188">
    <property type="entry name" value="PurM-like_N"/>
</dbReference>
<dbReference type="InterPro" id="IPR036921">
    <property type="entry name" value="PurM-like_N_sf"/>
</dbReference>
<dbReference type="InterPro" id="IPR023061">
    <property type="entry name" value="SelD_I"/>
</dbReference>
<dbReference type="InterPro" id="IPR004536">
    <property type="entry name" value="SPS/SelD"/>
</dbReference>
<dbReference type="NCBIfam" id="NF002098">
    <property type="entry name" value="PRK00943.1"/>
    <property type="match status" value="1"/>
</dbReference>
<dbReference type="NCBIfam" id="TIGR00476">
    <property type="entry name" value="selD"/>
    <property type="match status" value="1"/>
</dbReference>
<dbReference type="PANTHER" id="PTHR10256:SF0">
    <property type="entry name" value="INACTIVE SELENIDE, WATER DIKINASE-LIKE PROTEIN-RELATED"/>
    <property type="match status" value="1"/>
</dbReference>
<dbReference type="PANTHER" id="PTHR10256">
    <property type="entry name" value="SELENIDE, WATER DIKINASE"/>
    <property type="match status" value="1"/>
</dbReference>
<dbReference type="Pfam" id="PF00586">
    <property type="entry name" value="AIRS"/>
    <property type="match status" value="1"/>
</dbReference>
<dbReference type="Pfam" id="PF02769">
    <property type="entry name" value="AIRS_C"/>
    <property type="match status" value="1"/>
</dbReference>
<dbReference type="PIRSF" id="PIRSF036407">
    <property type="entry name" value="Selenphspht_syn"/>
    <property type="match status" value="1"/>
</dbReference>
<dbReference type="SUPFAM" id="SSF56042">
    <property type="entry name" value="PurM C-terminal domain-like"/>
    <property type="match status" value="1"/>
</dbReference>
<dbReference type="SUPFAM" id="SSF55326">
    <property type="entry name" value="PurM N-terminal domain-like"/>
    <property type="match status" value="1"/>
</dbReference>
<feature type="chain" id="PRO_1000130517" description="Selenide, water dikinase">
    <location>
        <begin position="1"/>
        <end position="354"/>
    </location>
</feature>
<feature type="active site" evidence="1">
    <location>
        <position position="23"/>
    </location>
</feature>
<feature type="binding site" description="in other chain" evidence="1">
    <location>
        <position position="26"/>
    </location>
    <ligand>
        <name>ATP</name>
        <dbReference type="ChEBI" id="CHEBI:30616"/>
        <note>ligand shared between dimeric partners</note>
    </ligand>
</feature>
<feature type="binding site" description="in other chain" evidence="1">
    <location>
        <begin position="54"/>
        <end position="56"/>
    </location>
    <ligand>
        <name>ATP</name>
        <dbReference type="ChEBI" id="CHEBI:30616"/>
        <note>ligand shared between dimeric partners</note>
    </ligand>
</feature>
<feature type="binding site" evidence="1">
    <location>
        <position position="57"/>
    </location>
    <ligand>
        <name>Mg(2+)</name>
        <dbReference type="ChEBI" id="CHEBI:18420"/>
    </ligand>
</feature>
<feature type="binding site" description="in other chain" evidence="1">
    <location>
        <position position="74"/>
    </location>
    <ligand>
        <name>ATP</name>
        <dbReference type="ChEBI" id="CHEBI:30616"/>
        <note>ligand shared between dimeric partners</note>
    </ligand>
</feature>
<feature type="binding site" description="in other chain" evidence="1">
    <location>
        <position position="97"/>
    </location>
    <ligand>
        <name>ATP</name>
        <dbReference type="ChEBI" id="CHEBI:30616"/>
        <note>ligand shared between dimeric partners</note>
    </ligand>
</feature>
<feature type="binding site" evidence="1">
    <location>
        <position position="97"/>
    </location>
    <ligand>
        <name>Mg(2+)</name>
        <dbReference type="ChEBI" id="CHEBI:18420"/>
    </ligand>
</feature>
<feature type="binding site" evidence="1">
    <location>
        <begin position="145"/>
        <end position="147"/>
    </location>
    <ligand>
        <name>ATP</name>
        <dbReference type="ChEBI" id="CHEBI:30616"/>
        <note>ligand shared between dimeric partners</note>
    </ligand>
</feature>
<feature type="binding site" evidence="1">
    <location>
        <position position="233"/>
    </location>
    <ligand>
        <name>Mg(2+)</name>
        <dbReference type="ChEBI" id="CHEBI:18420"/>
    </ligand>
</feature>
<feature type="site" description="Important for catalytic activity" evidence="1">
    <location>
        <position position="26"/>
    </location>
</feature>
<gene>
    <name evidence="1" type="primary">selD</name>
    <name type="ordered locus">BceJ2315_59980</name>
    <name type="ORF">BCAM2558</name>
</gene>
<reference key="1">
    <citation type="journal article" date="2009" name="J. Bacteriol.">
        <title>The genome of Burkholderia cenocepacia J2315, an epidemic pathogen of cystic fibrosis patients.</title>
        <authorList>
            <person name="Holden M.T."/>
            <person name="Seth-Smith H.M."/>
            <person name="Crossman L.C."/>
            <person name="Sebaihia M."/>
            <person name="Bentley S.D."/>
            <person name="Cerdeno-Tarraga A.M."/>
            <person name="Thomson N.R."/>
            <person name="Bason N."/>
            <person name="Quail M.A."/>
            <person name="Sharp S."/>
            <person name="Cherevach I."/>
            <person name="Churcher C."/>
            <person name="Goodhead I."/>
            <person name="Hauser H."/>
            <person name="Holroyd N."/>
            <person name="Mungall K."/>
            <person name="Scott P."/>
            <person name="Walker D."/>
            <person name="White B."/>
            <person name="Rose H."/>
            <person name="Iversen P."/>
            <person name="Mil-Homens D."/>
            <person name="Rocha E.P."/>
            <person name="Fialho A.M."/>
            <person name="Baldwin A."/>
            <person name="Dowson C."/>
            <person name="Barrell B.G."/>
            <person name="Govan J.R."/>
            <person name="Vandamme P."/>
            <person name="Hart C.A."/>
            <person name="Mahenthiralingam E."/>
            <person name="Parkhill J."/>
        </authorList>
    </citation>
    <scope>NUCLEOTIDE SEQUENCE [LARGE SCALE GENOMIC DNA]</scope>
    <source>
        <strain>ATCC BAA-245 / DSM 16553 / LMG 16656 / NCTC 13227 / J2315 / CF5610</strain>
    </source>
</reference>
<protein>
    <recommendedName>
        <fullName evidence="1">Selenide, water dikinase</fullName>
        <ecNumber evidence="1">2.7.9.3</ecNumber>
    </recommendedName>
    <alternativeName>
        <fullName evidence="1">Selenium donor protein</fullName>
    </alternativeName>
    <alternativeName>
        <fullName evidence="1">Selenophosphate synthase</fullName>
    </alternativeName>
</protein>
<organism>
    <name type="scientific">Burkholderia cenocepacia (strain ATCC BAA-245 / DSM 16553 / LMG 16656 / NCTC 13227 / J2315 / CF5610)</name>
    <name type="common">Burkholderia cepacia (strain J2315)</name>
    <dbReference type="NCBI Taxonomy" id="216591"/>
    <lineage>
        <taxon>Bacteria</taxon>
        <taxon>Pseudomonadati</taxon>
        <taxon>Pseudomonadota</taxon>
        <taxon>Betaproteobacteria</taxon>
        <taxon>Burkholderiales</taxon>
        <taxon>Burkholderiaceae</taxon>
        <taxon>Burkholderia</taxon>
        <taxon>Burkholderia cepacia complex</taxon>
    </lineage>
</organism>
<evidence type="ECO:0000255" key="1">
    <source>
        <dbReference type="HAMAP-Rule" id="MF_00625"/>
    </source>
</evidence>
<sequence length="354" mass="36212">MTEATQAQPAVPRLTSLSHGGGCGCKIAPGVLSELLKRATPPALFPDLLVGTETSDDAAVYRLNDEQAIVATTDFFMPIVDDPFDFGRIAATNALSDVYAMGGKPILALALVGMPINVLPHETIAAVLRGGESVCADAGIPVAGGHSIDSVEPIYGLAAIGVVHPSRVKRNAAARAGDVLVLGKPLGVGVLSAALKKNQLDADGYAQMVATTTKLNRPGAELAALPGVHALTDVTGFGLLGHTLELARGAQLTARVHYASLPWLAGVETFVADGVFTGASGRNWAAYGTDIRLADGLPPVAQALLTDPQTSGGLLVACVPEAVDDVLACFRADGFDRAAVIGEMADGPARVDVA</sequence>
<keyword id="KW-0067">ATP-binding</keyword>
<keyword id="KW-0418">Kinase</keyword>
<keyword id="KW-0460">Magnesium</keyword>
<keyword id="KW-0479">Metal-binding</keyword>
<keyword id="KW-0547">Nucleotide-binding</keyword>
<keyword id="KW-0711">Selenium</keyword>
<keyword id="KW-0808">Transferase</keyword>
<comment type="function">
    <text evidence="1">Synthesizes selenophosphate from selenide and ATP.</text>
</comment>
<comment type="catalytic activity">
    <reaction evidence="1">
        <text>hydrogenselenide + ATP + H2O = selenophosphate + AMP + phosphate + 2 H(+)</text>
        <dbReference type="Rhea" id="RHEA:18737"/>
        <dbReference type="ChEBI" id="CHEBI:15377"/>
        <dbReference type="ChEBI" id="CHEBI:15378"/>
        <dbReference type="ChEBI" id="CHEBI:16144"/>
        <dbReference type="ChEBI" id="CHEBI:29317"/>
        <dbReference type="ChEBI" id="CHEBI:30616"/>
        <dbReference type="ChEBI" id="CHEBI:43474"/>
        <dbReference type="ChEBI" id="CHEBI:456215"/>
        <dbReference type="EC" id="2.7.9.3"/>
    </reaction>
</comment>
<comment type="cofactor">
    <cofactor evidence="1">
        <name>Mg(2+)</name>
        <dbReference type="ChEBI" id="CHEBI:18420"/>
    </cofactor>
    <text evidence="1">Binds 1 Mg(2+) ion per monomer.</text>
</comment>
<comment type="subunit">
    <text evidence="1">Homodimer.</text>
</comment>
<comment type="similarity">
    <text evidence="1">Belongs to the selenophosphate synthase 1 family. Class I subfamily.</text>
</comment>
<accession>B4EJQ7</accession>
<name>SELD_BURCJ</name>
<proteinExistence type="inferred from homology"/>